<feature type="signal peptide" evidence="2">
    <location>
        <begin position="1"/>
        <end position="19"/>
    </location>
</feature>
<feature type="chain" id="PRO_0000006667" description="L-cystatin">
    <location>
        <begin position="20"/>
        <end position="133"/>
    </location>
</feature>
<feature type="short sequence motif" description="Secondary area of contact" evidence="1">
    <location>
        <begin position="67"/>
        <end position="71"/>
    </location>
</feature>
<feature type="site" description="Reactive site" evidence="1">
    <location>
        <position position="23"/>
    </location>
</feature>
<feature type="modified residue" description="Pyrrolidone carboxylic acid" evidence="2">
    <location>
        <position position="20"/>
    </location>
</feature>
<feature type="disulfide bond" evidence="1">
    <location>
        <begin position="85"/>
        <end position="98"/>
    </location>
</feature>
<feature type="disulfide bond" evidence="1">
    <location>
        <begin position="109"/>
        <end position="129"/>
    </location>
</feature>
<comment type="function">
    <text>Tight-binding inhibitor for papain. It has an important role in the protection of cells, antimicrobial activity against Gram-negative bacteria, defense against invading microbes, and response to external stimuli.</text>
</comment>
<comment type="subcellular location">
    <subcellularLocation>
        <location evidence="3">Cytoplasmic granule</location>
    </subcellularLocation>
    <text>Large granules of hemocytes.</text>
</comment>
<comment type="tissue specificity">
    <text evidence="3">Expressed in hemocytes and slightly in heart.</text>
</comment>
<comment type="similarity">
    <text evidence="4">Belongs to the cystatin family.</text>
</comment>
<protein>
    <recommendedName>
        <fullName>L-cystatin</fullName>
    </recommendedName>
</protein>
<reference key="1">
    <citation type="journal article" date="1996" name="J. Biochem.">
        <title>A cysteine protease inhibitor stored in the large granules of horseshoe crab hemocytes: purification, characterization, cDNA cloning and tissue localization.</title>
        <authorList>
            <person name="Agarwala K.L."/>
            <person name="Kawabata S."/>
            <person name="Hirata M."/>
            <person name="Miyagi M."/>
            <person name="Tsunasawa S."/>
            <person name="Iwanaga S."/>
        </authorList>
    </citation>
    <scope>NUCLEOTIDE SEQUENCE</scope>
    <scope>PROTEIN SEQUENCE OF 26-57; 60-105; 107-113 AND 115-128</scope>
    <scope>CHARACTERIZATION</scope>
    <scope>SUBCELLULAR LOCATION</scope>
    <scope>TISSUE SPECIFICITY</scope>
</reference>
<organism>
    <name type="scientific">Tachypleus tridentatus</name>
    <name type="common">Japanese horseshoe crab</name>
    <dbReference type="NCBI Taxonomy" id="6853"/>
    <lineage>
        <taxon>Eukaryota</taxon>
        <taxon>Metazoa</taxon>
        <taxon>Ecdysozoa</taxon>
        <taxon>Arthropoda</taxon>
        <taxon>Chelicerata</taxon>
        <taxon>Merostomata</taxon>
        <taxon>Xiphosura</taxon>
        <taxon>Limulidae</taxon>
        <taxon>Tachypleus</taxon>
    </lineage>
</organism>
<keyword id="KW-0044">Antibiotic</keyword>
<keyword id="KW-0929">Antimicrobial</keyword>
<keyword id="KW-0903">Direct protein sequencing</keyword>
<keyword id="KW-1015">Disulfide bond</keyword>
<keyword id="KW-0646">Protease inhibitor</keyword>
<keyword id="KW-0873">Pyrrolidone carboxylic acid</keyword>
<keyword id="KW-0732">Signal</keyword>
<keyword id="KW-0789">Thiol protease inhibitor</keyword>
<sequence length="133" mass="14691">MEGYNILAVLIILVGVSMGQIPGGWIDANVGDTDVKEAARFATEAQSSRSNSLYHHKLLKIHKARTQVVSGINYEVFIETGTTTCKKSEVPLEDLKRCAVPENGVKHLCQAIVWVQAWIPRTKVTKLECQNKG</sequence>
<dbReference type="PIR" id="JC4536">
    <property type="entry name" value="JC4536"/>
</dbReference>
<dbReference type="SMR" id="Q7M429"/>
<dbReference type="GO" id="GO:0005737">
    <property type="term" value="C:cytoplasm"/>
    <property type="evidence" value="ECO:0007669"/>
    <property type="project" value="TreeGrafter"/>
</dbReference>
<dbReference type="GO" id="GO:0005615">
    <property type="term" value="C:extracellular space"/>
    <property type="evidence" value="ECO:0007669"/>
    <property type="project" value="TreeGrafter"/>
</dbReference>
<dbReference type="GO" id="GO:0031982">
    <property type="term" value="C:vesicle"/>
    <property type="evidence" value="ECO:0007669"/>
    <property type="project" value="TreeGrafter"/>
</dbReference>
<dbReference type="GO" id="GO:0004869">
    <property type="term" value="F:cysteine-type endopeptidase inhibitor activity"/>
    <property type="evidence" value="ECO:0007669"/>
    <property type="project" value="UniProtKB-KW"/>
</dbReference>
<dbReference type="GO" id="GO:0042742">
    <property type="term" value="P:defense response to bacterium"/>
    <property type="evidence" value="ECO:0007669"/>
    <property type="project" value="UniProtKB-KW"/>
</dbReference>
<dbReference type="CDD" id="cd00042">
    <property type="entry name" value="CY"/>
    <property type="match status" value="1"/>
</dbReference>
<dbReference type="FunFam" id="3.10.450.10:FF:000004">
    <property type="entry name" value="Cystatin C"/>
    <property type="match status" value="1"/>
</dbReference>
<dbReference type="Gene3D" id="3.10.450.10">
    <property type="match status" value="1"/>
</dbReference>
<dbReference type="InterPro" id="IPR000010">
    <property type="entry name" value="Cystatin_dom"/>
</dbReference>
<dbReference type="InterPro" id="IPR046350">
    <property type="entry name" value="Cystatin_sf"/>
</dbReference>
<dbReference type="InterPro" id="IPR018073">
    <property type="entry name" value="Prot_inh_cystat_CS"/>
</dbReference>
<dbReference type="PANTHER" id="PTHR46186">
    <property type="entry name" value="CYSTATIN"/>
    <property type="match status" value="1"/>
</dbReference>
<dbReference type="PANTHER" id="PTHR46186:SF2">
    <property type="entry name" value="CYSTATIN"/>
    <property type="match status" value="1"/>
</dbReference>
<dbReference type="Pfam" id="PF00031">
    <property type="entry name" value="Cystatin"/>
    <property type="match status" value="1"/>
</dbReference>
<dbReference type="SMART" id="SM00043">
    <property type="entry name" value="CY"/>
    <property type="match status" value="1"/>
</dbReference>
<dbReference type="SUPFAM" id="SSF54403">
    <property type="entry name" value="Cystatin/monellin"/>
    <property type="match status" value="1"/>
</dbReference>
<dbReference type="PROSITE" id="PS00287">
    <property type="entry name" value="CYSTATIN"/>
    <property type="match status" value="1"/>
</dbReference>
<name>CYTL_TACTR</name>
<proteinExistence type="evidence at protein level"/>
<accession>Q7M429</accession>
<evidence type="ECO:0000250" key="1"/>
<evidence type="ECO:0000255" key="2"/>
<evidence type="ECO:0000269" key="3">
    <source>
    </source>
</evidence>
<evidence type="ECO:0000305" key="4"/>